<organism>
    <name type="scientific">Opitutus terrae (strain DSM 11246 / JCM 15787 / PB90-1)</name>
    <dbReference type="NCBI Taxonomy" id="452637"/>
    <lineage>
        <taxon>Bacteria</taxon>
        <taxon>Pseudomonadati</taxon>
        <taxon>Verrucomicrobiota</taxon>
        <taxon>Opitutia</taxon>
        <taxon>Opitutales</taxon>
        <taxon>Opitutaceae</taxon>
        <taxon>Opitutus</taxon>
    </lineage>
</organism>
<name>GATB_OPITP</name>
<dbReference type="EC" id="6.3.5.-" evidence="1"/>
<dbReference type="EMBL" id="CP001032">
    <property type="protein sequence ID" value="ACB75643.1"/>
    <property type="molecule type" value="Genomic_DNA"/>
</dbReference>
<dbReference type="RefSeq" id="WP_012375180.1">
    <property type="nucleotide sequence ID" value="NC_010571.1"/>
</dbReference>
<dbReference type="SMR" id="B1ZQN4"/>
<dbReference type="STRING" id="452637.Oter_2361"/>
<dbReference type="KEGG" id="ote:Oter_2361"/>
<dbReference type="eggNOG" id="COG0064">
    <property type="taxonomic scope" value="Bacteria"/>
</dbReference>
<dbReference type="HOGENOM" id="CLU_019240_0_0_0"/>
<dbReference type="OrthoDB" id="9804078at2"/>
<dbReference type="Proteomes" id="UP000007013">
    <property type="component" value="Chromosome"/>
</dbReference>
<dbReference type="GO" id="GO:0050566">
    <property type="term" value="F:asparaginyl-tRNA synthase (glutamine-hydrolyzing) activity"/>
    <property type="evidence" value="ECO:0007669"/>
    <property type="project" value="RHEA"/>
</dbReference>
<dbReference type="GO" id="GO:0005524">
    <property type="term" value="F:ATP binding"/>
    <property type="evidence" value="ECO:0007669"/>
    <property type="project" value="UniProtKB-KW"/>
</dbReference>
<dbReference type="GO" id="GO:0050567">
    <property type="term" value="F:glutaminyl-tRNA synthase (glutamine-hydrolyzing) activity"/>
    <property type="evidence" value="ECO:0007669"/>
    <property type="project" value="UniProtKB-UniRule"/>
</dbReference>
<dbReference type="GO" id="GO:0070681">
    <property type="term" value="P:glutaminyl-tRNAGln biosynthesis via transamidation"/>
    <property type="evidence" value="ECO:0007669"/>
    <property type="project" value="TreeGrafter"/>
</dbReference>
<dbReference type="GO" id="GO:0006412">
    <property type="term" value="P:translation"/>
    <property type="evidence" value="ECO:0007669"/>
    <property type="project" value="UniProtKB-UniRule"/>
</dbReference>
<dbReference type="FunFam" id="1.10.10.410:FF:000001">
    <property type="entry name" value="Aspartyl/glutamyl-tRNA(Asn/Gln) amidotransferase subunit B"/>
    <property type="match status" value="1"/>
</dbReference>
<dbReference type="Gene3D" id="1.10.10.410">
    <property type="match status" value="1"/>
</dbReference>
<dbReference type="Gene3D" id="1.10.150.380">
    <property type="entry name" value="GatB domain, N-terminal subdomain"/>
    <property type="match status" value="1"/>
</dbReference>
<dbReference type="HAMAP" id="MF_00121">
    <property type="entry name" value="GatB"/>
    <property type="match status" value="1"/>
</dbReference>
<dbReference type="InterPro" id="IPR017959">
    <property type="entry name" value="Asn/Gln-tRNA_amidoTrfase_suB/E"/>
</dbReference>
<dbReference type="InterPro" id="IPR006075">
    <property type="entry name" value="Asn/Gln-tRNA_Trfase_suB/E_cat"/>
</dbReference>
<dbReference type="InterPro" id="IPR018027">
    <property type="entry name" value="Asn/Gln_amidotransferase"/>
</dbReference>
<dbReference type="InterPro" id="IPR003789">
    <property type="entry name" value="Asn/Gln_tRNA_amidoTrase-B-like"/>
</dbReference>
<dbReference type="InterPro" id="IPR004413">
    <property type="entry name" value="GatB"/>
</dbReference>
<dbReference type="InterPro" id="IPR042114">
    <property type="entry name" value="GatB_C_1"/>
</dbReference>
<dbReference type="InterPro" id="IPR023168">
    <property type="entry name" value="GatB_Yqey_C_2"/>
</dbReference>
<dbReference type="InterPro" id="IPR017958">
    <property type="entry name" value="Gln-tRNA_amidoTrfase_suB_CS"/>
</dbReference>
<dbReference type="InterPro" id="IPR014746">
    <property type="entry name" value="Gln_synth/guanido_kin_cat_dom"/>
</dbReference>
<dbReference type="NCBIfam" id="TIGR00133">
    <property type="entry name" value="gatB"/>
    <property type="match status" value="1"/>
</dbReference>
<dbReference type="NCBIfam" id="NF004012">
    <property type="entry name" value="PRK05477.1-2"/>
    <property type="match status" value="1"/>
</dbReference>
<dbReference type="NCBIfam" id="NF004014">
    <property type="entry name" value="PRK05477.1-4"/>
    <property type="match status" value="1"/>
</dbReference>
<dbReference type="PANTHER" id="PTHR11659">
    <property type="entry name" value="GLUTAMYL-TRNA GLN AMIDOTRANSFERASE SUBUNIT B MITOCHONDRIAL AND PROKARYOTIC PET112-RELATED"/>
    <property type="match status" value="1"/>
</dbReference>
<dbReference type="PANTHER" id="PTHR11659:SF0">
    <property type="entry name" value="GLUTAMYL-TRNA(GLN) AMIDOTRANSFERASE SUBUNIT B, MITOCHONDRIAL"/>
    <property type="match status" value="1"/>
</dbReference>
<dbReference type="Pfam" id="PF02934">
    <property type="entry name" value="GatB_N"/>
    <property type="match status" value="1"/>
</dbReference>
<dbReference type="Pfam" id="PF02637">
    <property type="entry name" value="GatB_Yqey"/>
    <property type="match status" value="1"/>
</dbReference>
<dbReference type="SMART" id="SM00845">
    <property type="entry name" value="GatB_Yqey"/>
    <property type="match status" value="1"/>
</dbReference>
<dbReference type="SUPFAM" id="SSF89095">
    <property type="entry name" value="GatB/YqeY motif"/>
    <property type="match status" value="1"/>
</dbReference>
<dbReference type="SUPFAM" id="SSF55931">
    <property type="entry name" value="Glutamine synthetase/guanido kinase"/>
    <property type="match status" value="1"/>
</dbReference>
<dbReference type="PROSITE" id="PS01234">
    <property type="entry name" value="GATB"/>
    <property type="match status" value="1"/>
</dbReference>
<gene>
    <name evidence="1" type="primary">gatB</name>
    <name type="ordered locus">Oter_2361</name>
</gene>
<feature type="chain" id="PRO_1000095230" description="Aspartyl/glutamyl-tRNA(Asn/Gln) amidotransferase subunit B">
    <location>
        <begin position="1"/>
        <end position="485"/>
    </location>
</feature>
<proteinExistence type="inferred from homology"/>
<reference key="1">
    <citation type="journal article" date="2011" name="J. Bacteriol.">
        <title>Genome sequence of the verrucomicrobium Opitutus terrae PB90-1, an abundant inhabitant of rice paddy soil ecosystems.</title>
        <authorList>
            <person name="van Passel M.W."/>
            <person name="Kant R."/>
            <person name="Palva A."/>
            <person name="Copeland A."/>
            <person name="Lucas S."/>
            <person name="Lapidus A."/>
            <person name="Glavina del Rio T."/>
            <person name="Pitluck S."/>
            <person name="Goltsman E."/>
            <person name="Clum A."/>
            <person name="Sun H."/>
            <person name="Schmutz J."/>
            <person name="Larimer F.W."/>
            <person name="Land M.L."/>
            <person name="Hauser L."/>
            <person name="Kyrpides N."/>
            <person name="Mikhailova N."/>
            <person name="Richardson P.P."/>
            <person name="Janssen P.H."/>
            <person name="de Vos W.M."/>
            <person name="Smidt H."/>
        </authorList>
    </citation>
    <scope>NUCLEOTIDE SEQUENCE [LARGE SCALE GENOMIC DNA]</scope>
    <source>
        <strain>DSM 11246 / JCM 15787 / PB90-1</strain>
    </source>
</reference>
<keyword id="KW-0067">ATP-binding</keyword>
<keyword id="KW-0436">Ligase</keyword>
<keyword id="KW-0547">Nucleotide-binding</keyword>
<keyword id="KW-0648">Protein biosynthesis</keyword>
<keyword id="KW-1185">Reference proteome</keyword>
<evidence type="ECO:0000255" key="1">
    <source>
        <dbReference type="HAMAP-Rule" id="MF_00121"/>
    </source>
</evidence>
<protein>
    <recommendedName>
        <fullName evidence="1">Aspartyl/glutamyl-tRNA(Asn/Gln) amidotransferase subunit B</fullName>
        <shortName evidence="1">Asp/Glu-ADT subunit B</shortName>
        <ecNumber evidence="1">6.3.5.-</ecNumber>
    </recommendedName>
</protein>
<accession>B1ZQN4</accession>
<sequence>MNYEAVIGLEVHVQVKTASKMFTRVAAGYGHAPNTLTDPVVLALPGTLPVMNKAALDAIIKAGLLLGCEIAPVCKWDRKNYFYPDSPKNYQISQYDQPICLGGAVEIELPGSARNVMGEHKKIPLTRIHLEEDVGKLNHESVDSLVDYNRAGTPLMEIVSEPAIHSAEEAFAYLTSLRATMIYGGISDCDMEKGQLRCDANISVRPVGETKLGTKVELKNLNSISFVRDGIAHEIKRQLAVIERGGTIVQETRDYDGQTGTSQSLRSKEMAHDYRYFPDPDLMPVVVDQAWKARIQTTCPELPFDKQRRFFEQYRLPYTLTSVLVWDRELSDYFEETVKIAGADKAQTVGNWIVNDLLREIGTARVPLADAKVRPAHIAELVKLIDAGTILTNAAKEIFVEMFATGDTPAIIADRRGLKAAPTDSNELEQWCRDAIAANAKAVAEFKAGKDSAINAFKGPVMKAAKGKANPKLVDETLRRLLAAL</sequence>
<comment type="function">
    <text evidence="1">Allows the formation of correctly charged Asn-tRNA(Asn) or Gln-tRNA(Gln) through the transamidation of misacylated Asp-tRNA(Asn) or Glu-tRNA(Gln) in organisms which lack either or both of asparaginyl-tRNA or glutaminyl-tRNA synthetases. The reaction takes place in the presence of glutamine and ATP through an activated phospho-Asp-tRNA(Asn) or phospho-Glu-tRNA(Gln).</text>
</comment>
<comment type="catalytic activity">
    <reaction evidence="1">
        <text>L-glutamyl-tRNA(Gln) + L-glutamine + ATP + H2O = L-glutaminyl-tRNA(Gln) + L-glutamate + ADP + phosphate + H(+)</text>
        <dbReference type="Rhea" id="RHEA:17521"/>
        <dbReference type="Rhea" id="RHEA-COMP:9681"/>
        <dbReference type="Rhea" id="RHEA-COMP:9684"/>
        <dbReference type="ChEBI" id="CHEBI:15377"/>
        <dbReference type="ChEBI" id="CHEBI:15378"/>
        <dbReference type="ChEBI" id="CHEBI:29985"/>
        <dbReference type="ChEBI" id="CHEBI:30616"/>
        <dbReference type="ChEBI" id="CHEBI:43474"/>
        <dbReference type="ChEBI" id="CHEBI:58359"/>
        <dbReference type="ChEBI" id="CHEBI:78520"/>
        <dbReference type="ChEBI" id="CHEBI:78521"/>
        <dbReference type="ChEBI" id="CHEBI:456216"/>
    </reaction>
</comment>
<comment type="catalytic activity">
    <reaction evidence="1">
        <text>L-aspartyl-tRNA(Asn) + L-glutamine + ATP + H2O = L-asparaginyl-tRNA(Asn) + L-glutamate + ADP + phosphate + 2 H(+)</text>
        <dbReference type="Rhea" id="RHEA:14513"/>
        <dbReference type="Rhea" id="RHEA-COMP:9674"/>
        <dbReference type="Rhea" id="RHEA-COMP:9677"/>
        <dbReference type="ChEBI" id="CHEBI:15377"/>
        <dbReference type="ChEBI" id="CHEBI:15378"/>
        <dbReference type="ChEBI" id="CHEBI:29985"/>
        <dbReference type="ChEBI" id="CHEBI:30616"/>
        <dbReference type="ChEBI" id="CHEBI:43474"/>
        <dbReference type="ChEBI" id="CHEBI:58359"/>
        <dbReference type="ChEBI" id="CHEBI:78515"/>
        <dbReference type="ChEBI" id="CHEBI:78516"/>
        <dbReference type="ChEBI" id="CHEBI:456216"/>
    </reaction>
</comment>
<comment type="subunit">
    <text evidence="1">Heterotrimer of A, B and C subunits.</text>
</comment>
<comment type="similarity">
    <text evidence="1">Belongs to the GatB/GatE family. GatB subfamily.</text>
</comment>